<dbReference type="EC" id="2.7.1.33" evidence="1"/>
<dbReference type="EMBL" id="CP000112">
    <property type="protein sequence ID" value="ABB37095.1"/>
    <property type="molecule type" value="Genomic_DNA"/>
</dbReference>
<dbReference type="RefSeq" id="WP_011366441.1">
    <property type="nucleotide sequence ID" value="NC_007519.1"/>
</dbReference>
<dbReference type="SMR" id="Q316Q1"/>
<dbReference type="STRING" id="207559.Dde_0294"/>
<dbReference type="KEGG" id="dde:Dde_0294"/>
<dbReference type="eggNOG" id="COG1521">
    <property type="taxonomic scope" value="Bacteria"/>
</dbReference>
<dbReference type="HOGENOM" id="CLU_066627_1_0_7"/>
<dbReference type="UniPathway" id="UPA00241">
    <property type="reaction ID" value="UER00352"/>
</dbReference>
<dbReference type="Proteomes" id="UP000002710">
    <property type="component" value="Chromosome"/>
</dbReference>
<dbReference type="GO" id="GO:0005737">
    <property type="term" value="C:cytoplasm"/>
    <property type="evidence" value="ECO:0007669"/>
    <property type="project" value="UniProtKB-SubCell"/>
</dbReference>
<dbReference type="GO" id="GO:0005524">
    <property type="term" value="F:ATP binding"/>
    <property type="evidence" value="ECO:0007669"/>
    <property type="project" value="UniProtKB-UniRule"/>
</dbReference>
<dbReference type="GO" id="GO:0046872">
    <property type="term" value="F:metal ion binding"/>
    <property type="evidence" value="ECO:0007669"/>
    <property type="project" value="UniProtKB-KW"/>
</dbReference>
<dbReference type="GO" id="GO:0004594">
    <property type="term" value="F:pantothenate kinase activity"/>
    <property type="evidence" value="ECO:0007669"/>
    <property type="project" value="UniProtKB-UniRule"/>
</dbReference>
<dbReference type="GO" id="GO:0015937">
    <property type="term" value="P:coenzyme A biosynthetic process"/>
    <property type="evidence" value="ECO:0007669"/>
    <property type="project" value="UniProtKB-UniRule"/>
</dbReference>
<dbReference type="CDD" id="cd24015">
    <property type="entry name" value="ASKHA_NBD_PanK-III"/>
    <property type="match status" value="1"/>
</dbReference>
<dbReference type="Gene3D" id="3.30.420.40">
    <property type="match status" value="2"/>
</dbReference>
<dbReference type="HAMAP" id="MF_01274">
    <property type="entry name" value="Pantothen_kinase_3"/>
    <property type="match status" value="1"/>
</dbReference>
<dbReference type="InterPro" id="IPR043129">
    <property type="entry name" value="ATPase_NBD"/>
</dbReference>
<dbReference type="InterPro" id="IPR004619">
    <property type="entry name" value="Type_III_PanK"/>
</dbReference>
<dbReference type="NCBIfam" id="TIGR00671">
    <property type="entry name" value="baf"/>
    <property type="match status" value="1"/>
</dbReference>
<dbReference type="NCBIfam" id="NF009855">
    <property type="entry name" value="PRK13321.1"/>
    <property type="match status" value="1"/>
</dbReference>
<dbReference type="PANTHER" id="PTHR34265">
    <property type="entry name" value="TYPE III PANTOTHENATE KINASE"/>
    <property type="match status" value="1"/>
</dbReference>
<dbReference type="PANTHER" id="PTHR34265:SF1">
    <property type="entry name" value="TYPE III PANTOTHENATE KINASE"/>
    <property type="match status" value="1"/>
</dbReference>
<dbReference type="Pfam" id="PF03309">
    <property type="entry name" value="Pan_kinase"/>
    <property type="match status" value="1"/>
</dbReference>
<dbReference type="SUPFAM" id="SSF53067">
    <property type="entry name" value="Actin-like ATPase domain"/>
    <property type="match status" value="2"/>
</dbReference>
<comment type="function">
    <text evidence="1">Catalyzes the phosphorylation of pantothenate (Pan), the first step in CoA biosynthesis.</text>
</comment>
<comment type="catalytic activity">
    <reaction evidence="1">
        <text>(R)-pantothenate + ATP = (R)-4'-phosphopantothenate + ADP + H(+)</text>
        <dbReference type="Rhea" id="RHEA:16373"/>
        <dbReference type="ChEBI" id="CHEBI:10986"/>
        <dbReference type="ChEBI" id="CHEBI:15378"/>
        <dbReference type="ChEBI" id="CHEBI:29032"/>
        <dbReference type="ChEBI" id="CHEBI:30616"/>
        <dbReference type="ChEBI" id="CHEBI:456216"/>
        <dbReference type="EC" id="2.7.1.33"/>
    </reaction>
</comment>
<comment type="cofactor">
    <cofactor evidence="1">
        <name>NH4(+)</name>
        <dbReference type="ChEBI" id="CHEBI:28938"/>
    </cofactor>
    <cofactor evidence="1">
        <name>K(+)</name>
        <dbReference type="ChEBI" id="CHEBI:29103"/>
    </cofactor>
    <text evidence="1">A monovalent cation. Ammonium or potassium.</text>
</comment>
<comment type="pathway">
    <text evidence="1">Cofactor biosynthesis; coenzyme A biosynthesis; CoA from (R)-pantothenate: step 1/5.</text>
</comment>
<comment type="subunit">
    <text evidence="1">Homodimer.</text>
</comment>
<comment type="subcellular location">
    <subcellularLocation>
        <location evidence="1">Cytoplasm</location>
    </subcellularLocation>
</comment>
<comment type="similarity">
    <text evidence="1">Belongs to the type III pantothenate kinase family.</text>
</comment>
<accession>Q316Q1</accession>
<gene>
    <name evidence="1" type="primary">coaX</name>
    <name type="ordered locus">Dde_0294</name>
</gene>
<reference key="1">
    <citation type="journal article" date="2011" name="J. Bacteriol.">
        <title>Complete genome sequence and updated annotation of Desulfovibrio alaskensis G20.</title>
        <authorList>
            <person name="Hauser L.J."/>
            <person name="Land M.L."/>
            <person name="Brown S.D."/>
            <person name="Larimer F."/>
            <person name="Keller K.L."/>
            <person name="Rapp-Giles B.J."/>
            <person name="Price M.N."/>
            <person name="Lin M."/>
            <person name="Bruce D.C."/>
            <person name="Detter J.C."/>
            <person name="Tapia R."/>
            <person name="Han C.S."/>
            <person name="Goodwin L.A."/>
            <person name="Cheng J.F."/>
            <person name="Pitluck S."/>
            <person name="Copeland A."/>
            <person name="Lucas S."/>
            <person name="Nolan M."/>
            <person name="Lapidus A.L."/>
            <person name="Palumbo A.V."/>
            <person name="Wall J.D."/>
        </authorList>
    </citation>
    <scope>NUCLEOTIDE SEQUENCE [LARGE SCALE GENOMIC DNA]</scope>
    <source>
        <strain>ATCC BAA-1058 / DSM 17464 / G20</strain>
    </source>
</reference>
<organism>
    <name type="scientific">Oleidesulfovibrio alaskensis (strain ATCC BAA-1058 / DSM 17464 / G20)</name>
    <name type="common">Desulfovibrio alaskensis</name>
    <dbReference type="NCBI Taxonomy" id="207559"/>
    <lineage>
        <taxon>Bacteria</taxon>
        <taxon>Pseudomonadati</taxon>
        <taxon>Thermodesulfobacteriota</taxon>
        <taxon>Desulfovibrionia</taxon>
        <taxon>Desulfovibrionales</taxon>
        <taxon>Desulfovibrionaceae</taxon>
        <taxon>Oleidesulfovibrio</taxon>
    </lineage>
</organism>
<protein>
    <recommendedName>
        <fullName evidence="1">Type III pantothenate kinase</fullName>
        <ecNumber evidence="1">2.7.1.33</ecNumber>
    </recommendedName>
    <alternativeName>
        <fullName evidence="1">PanK-III</fullName>
    </alternativeName>
    <alternativeName>
        <fullName evidence="1">Pantothenic acid kinase</fullName>
    </alternativeName>
</protein>
<proteinExistence type="inferred from homology"/>
<keyword id="KW-0067">ATP-binding</keyword>
<keyword id="KW-0173">Coenzyme A biosynthesis</keyword>
<keyword id="KW-0963">Cytoplasm</keyword>
<keyword id="KW-0418">Kinase</keyword>
<keyword id="KW-0479">Metal-binding</keyword>
<keyword id="KW-0547">Nucleotide-binding</keyword>
<keyword id="KW-0630">Potassium</keyword>
<keyword id="KW-1185">Reference proteome</keyword>
<keyword id="KW-0808">Transferase</keyword>
<feature type="chain" id="PRO_0000267523" description="Type III pantothenate kinase">
    <location>
        <begin position="1"/>
        <end position="263"/>
    </location>
</feature>
<feature type="active site" description="Proton acceptor" evidence="1">
    <location>
        <position position="112"/>
    </location>
</feature>
<feature type="binding site" evidence="1">
    <location>
        <begin position="9"/>
        <end position="16"/>
    </location>
    <ligand>
        <name>ATP</name>
        <dbReference type="ChEBI" id="CHEBI:30616"/>
    </ligand>
</feature>
<feature type="binding site" evidence="1">
    <location>
        <position position="103"/>
    </location>
    <ligand>
        <name>substrate</name>
    </ligand>
</feature>
<feature type="binding site" evidence="1">
    <location>
        <begin position="110"/>
        <end position="113"/>
    </location>
    <ligand>
        <name>substrate</name>
    </ligand>
</feature>
<feature type="binding site" evidence="1">
    <location>
        <position position="134"/>
    </location>
    <ligand>
        <name>K(+)</name>
        <dbReference type="ChEBI" id="CHEBI:29103"/>
    </ligand>
</feature>
<feature type="binding site" evidence="1">
    <location>
        <position position="137"/>
    </location>
    <ligand>
        <name>ATP</name>
        <dbReference type="ChEBI" id="CHEBI:30616"/>
    </ligand>
</feature>
<feature type="binding site" evidence="1">
    <location>
        <position position="190"/>
    </location>
    <ligand>
        <name>substrate</name>
    </ligand>
</feature>
<name>COAX_OLEA2</name>
<sequence length="263" mass="28011">MPSVFLLFDIGNTNVKIGIADHDGVVASYVLPTDTHQTGDSLGLRLADVVRHAGFAPGDVTACVASSVVPSFNPLMRQACGRYFDRRLLLAPEDIAIPLENRYERPQEVGADRLVAAFAARRLWPAPRSIVSVDYGTATTFDCVQGEAYLGGLICPGVHSAAGALAAGTARLPRISLDVREDLPVVGRSTSMSLNHGFVFGFASMTEGLCHRLSAVLEAPMQVVATGGFASAIARVSNCFDHVRPDLLLEGLRILYMESGIKG</sequence>
<evidence type="ECO:0000255" key="1">
    <source>
        <dbReference type="HAMAP-Rule" id="MF_01274"/>
    </source>
</evidence>